<gene>
    <name evidence="1" type="primary">glnE</name>
    <name type="ordered locus">Blon_1452</name>
    <name type="ordered locus">BLIJ_1498</name>
</gene>
<proteinExistence type="inferred from homology"/>
<comment type="function">
    <text evidence="1">Involved in the regulation of glutamine synthetase GlnA, a key enzyme in the process to assimilate ammonia. When cellular nitrogen levels are high, the C-terminal adenylyl transferase (AT) inactivates GlnA by covalent transfer of an adenylyl group from ATP to specific tyrosine residue of GlnA, thus reducing its activity. Conversely, when nitrogen levels are low, the N-terminal adenylyl removase (AR) activates GlnA by removing the adenylyl group by phosphorolysis, increasing its activity. The regulatory region of GlnE binds the signal transduction protein PII (GlnB) which indicates the nitrogen status of the cell.</text>
</comment>
<comment type="catalytic activity">
    <reaction evidence="1">
        <text>[glutamine synthetase]-O(4)-(5'-adenylyl)-L-tyrosine + phosphate = [glutamine synthetase]-L-tyrosine + ADP</text>
        <dbReference type="Rhea" id="RHEA:43716"/>
        <dbReference type="Rhea" id="RHEA-COMP:10660"/>
        <dbReference type="Rhea" id="RHEA-COMP:10661"/>
        <dbReference type="ChEBI" id="CHEBI:43474"/>
        <dbReference type="ChEBI" id="CHEBI:46858"/>
        <dbReference type="ChEBI" id="CHEBI:83624"/>
        <dbReference type="ChEBI" id="CHEBI:456216"/>
        <dbReference type="EC" id="2.7.7.89"/>
    </reaction>
</comment>
<comment type="catalytic activity">
    <reaction evidence="1">
        <text>[glutamine synthetase]-L-tyrosine + ATP = [glutamine synthetase]-O(4)-(5'-adenylyl)-L-tyrosine + diphosphate</text>
        <dbReference type="Rhea" id="RHEA:18589"/>
        <dbReference type="Rhea" id="RHEA-COMP:10660"/>
        <dbReference type="Rhea" id="RHEA-COMP:10661"/>
        <dbReference type="ChEBI" id="CHEBI:30616"/>
        <dbReference type="ChEBI" id="CHEBI:33019"/>
        <dbReference type="ChEBI" id="CHEBI:46858"/>
        <dbReference type="ChEBI" id="CHEBI:83624"/>
        <dbReference type="EC" id="2.7.7.42"/>
    </reaction>
</comment>
<comment type="cofactor">
    <cofactor evidence="1">
        <name>Mg(2+)</name>
        <dbReference type="ChEBI" id="CHEBI:18420"/>
    </cofactor>
</comment>
<comment type="similarity">
    <text evidence="1">Belongs to the GlnE family.</text>
</comment>
<sequence>MESSMFKPSSMDLIRAGLQDLDRARALFGQLKADAIADGRCAELLGVLAHACDPDVALGNFVDIVNAMQSSRRDLDRVIPDAGALRRLITVLGASDAMGKFMRFRPELVEAASVGSADSHLFNRAQRRARLLMAVGADPDDQAMPVASKDLAEAATALRAGYRRQLAAIIAQDVMAEDPIRIQPTISSELSDLADAALEGALAIARHETEGNEHVRFTIIGMGKLGAQELNYVSDVDLIYVVEPADKDVDHQTLIRVGTKMGTMLQRVCQSVIMGVAEQPLWQIDGGLRPEGKDGALVRVLSSHKNYYEQWAENWEFQALLKARPVAGDPDLGQAYMDMSRPFVWSASKRKNFVYDCQKMRKRVEDLIPAPLKDREIKLGRGGLRDVEFTVQMLQLVHGRTDESLRTSNTLDSLQRLSEGGYVSRKQAVRMSQDYRFERVMEHRQQIWSLKRTHLFPDLGRASVGGLEKKRDIDVDELNQNQELRRLARAFGLHPEELVDKYDDTRREVRHLHLDIYYRPMLPVNAQMENDQIVLSVEAAQERFESIGFGDPDAAIRHVQALTAGVGRAAKINRIILPAVLQWLGEGQNPDMGLLNWRKLEENFGTESGYLGFLRDSTSAAQRLCHILSNSRFLGDALNKSVESISWLGDDGNLQARTREALDVQTGSALERFGSNINEFATSMRAMRRHEIERIGLSWMSGVISDSDSLKAMTDVYDAIIDASLTWAVRHQIAAFGVETAPAGITVIAMGRYGGREVNFSSDADAILIYRPADDADDGQANAFAKKVVEDLRNILQGPTTLEPKIELDLDLRPEGKNGPLVRSYASCEEYYESWASTWERQALLRARYAAGDAELARDFLINIADPLRYPTAELTEAELQNIRKLKARMEAERLPRGVRRERHLKLGKGGLSDVEWTVQLMQLQHAGDIKDLRVNGTLEALDVLEAKKLISAIDAIQLRKTWTLCTAARNGNYLWSGRANQADILPDDIYSLGGIAVYLGYGAHRGQHFENDLLAVMRKCRDVCQRLFYGQTEGEATAAATATASAATPQPQTAPRPRMHVIAPRLERNRRRAQR</sequence>
<evidence type="ECO:0000255" key="1">
    <source>
        <dbReference type="HAMAP-Rule" id="MF_00802"/>
    </source>
</evidence>
<evidence type="ECO:0000256" key="2">
    <source>
        <dbReference type="SAM" id="MobiDB-lite"/>
    </source>
</evidence>
<reference key="1">
    <citation type="journal article" date="2008" name="Proc. Natl. Acad. Sci. U.S.A.">
        <title>The genome sequence of Bifidobacterium longum subsp. infantis reveals adaptations for milk utilization within the infant microbiome.</title>
        <authorList>
            <person name="Sela D.A."/>
            <person name="Chapman J."/>
            <person name="Adeuya A."/>
            <person name="Kim J.H."/>
            <person name="Chen F."/>
            <person name="Whitehead T.R."/>
            <person name="Lapidus A."/>
            <person name="Rokhsar D.S."/>
            <person name="Lebrilla C.B."/>
            <person name="German J.B."/>
            <person name="Price N.P."/>
            <person name="Richardson P.M."/>
            <person name="Mills D.A."/>
        </authorList>
    </citation>
    <scope>NUCLEOTIDE SEQUENCE [LARGE SCALE GENOMIC DNA]</scope>
    <source>
        <strain>ATCC 15697 / DSM 20088 / JCM 1222 / NCTC 11817 / S12</strain>
    </source>
</reference>
<reference key="2">
    <citation type="journal article" date="2011" name="Nature">
        <title>Bifidobacteria can protect from enteropathogenic infection through production of acetate.</title>
        <authorList>
            <person name="Fukuda S."/>
            <person name="Toh H."/>
            <person name="Hase K."/>
            <person name="Oshima K."/>
            <person name="Nakanishi Y."/>
            <person name="Yoshimura K."/>
            <person name="Tobe T."/>
            <person name="Clarke J.M."/>
            <person name="Topping D.L."/>
            <person name="Suzuki T."/>
            <person name="Taylor T.D."/>
            <person name="Itoh K."/>
            <person name="Kikuchi J."/>
            <person name="Morita H."/>
            <person name="Hattori M."/>
            <person name="Ohno H."/>
        </authorList>
    </citation>
    <scope>NUCLEOTIDE SEQUENCE [LARGE SCALE GENOMIC DNA]</scope>
    <source>
        <strain>ATCC 15697 / DSM 20088 / JCM 1222 / NCTC 11817 / S12</strain>
    </source>
</reference>
<dbReference type="EC" id="2.7.7.89" evidence="1"/>
<dbReference type="EC" id="2.7.7.42" evidence="1"/>
<dbReference type="EMBL" id="CP001095">
    <property type="protein sequence ID" value="ACJ52535.1"/>
    <property type="molecule type" value="Genomic_DNA"/>
</dbReference>
<dbReference type="EMBL" id="AP010889">
    <property type="protein sequence ID" value="BAJ69081.1"/>
    <property type="molecule type" value="Genomic_DNA"/>
</dbReference>
<dbReference type="RefSeq" id="WP_012577774.1">
    <property type="nucleotide sequence ID" value="NC_011593.1"/>
</dbReference>
<dbReference type="SMR" id="B7GRV5"/>
<dbReference type="KEGG" id="bln:Blon_1452"/>
<dbReference type="KEGG" id="blon:BLIJ_1498"/>
<dbReference type="PATRIC" id="fig|391904.8.peg.1511"/>
<dbReference type="HOGENOM" id="CLU_006233_1_0_11"/>
<dbReference type="Proteomes" id="UP000001360">
    <property type="component" value="Chromosome"/>
</dbReference>
<dbReference type="GO" id="GO:0005829">
    <property type="term" value="C:cytosol"/>
    <property type="evidence" value="ECO:0007669"/>
    <property type="project" value="TreeGrafter"/>
</dbReference>
<dbReference type="GO" id="GO:0008882">
    <property type="term" value="F:[glutamate-ammonia-ligase] adenylyltransferase activity"/>
    <property type="evidence" value="ECO:0007669"/>
    <property type="project" value="UniProtKB-UniRule"/>
</dbReference>
<dbReference type="GO" id="GO:0047388">
    <property type="term" value="F:[glutamine synthetase]-adenylyl-L-tyrosine phosphorylase activity"/>
    <property type="evidence" value="ECO:0007669"/>
    <property type="project" value="UniProtKB-EC"/>
</dbReference>
<dbReference type="GO" id="GO:0005524">
    <property type="term" value="F:ATP binding"/>
    <property type="evidence" value="ECO:0007669"/>
    <property type="project" value="UniProtKB-UniRule"/>
</dbReference>
<dbReference type="GO" id="GO:0000287">
    <property type="term" value="F:magnesium ion binding"/>
    <property type="evidence" value="ECO:0007669"/>
    <property type="project" value="UniProtKB-UniRule"/>
</dbReference>
<dbReference type="GO" id="GO:0000820">
    <property type="term" value="P:regulation of glutamine family amino acid metabolic process"/>
    <property type="evidence" value="ECO:0007669"/>
    <property type="project" value="UniProtKB-UniRule"/>
</dbReference>
<dbReference type="CDD" id="cd05401">
    <property type="entry name" value="NT_GlnE_GlnD_like"/>
    <property type="match status" value="2"/>
</dbReference>
<dbReference type="Gene3D" id="3.30.460.10">
    <property type="entry name" value="Beta Polymerase, domain 2"/>
    <property type="match status" value="2"/>
</dbReference>
<dbReference type="Gene3D" id="1.20.120.330">
    <property type="entry name" value="Nucleotidyltransferases domain 2"/>
    <property type="match status" value="2"/>
</dbReference>
<dbReference type="HAMAP" id="MF_00802">
    <property type="entry name" value="GlnE"/>
    <property type="match status" value="1"/>
</dbReference>
<dbReference type="InterPro" id="IPR023057">
    <property type="entry name" value="GlnE"/>
</dbReference>
<dbReference type="InterPro" id="IPR005190">
    <property type="entry name" value="GlnE_rpt_dom"/>
</dbReference>
<dbReference type="InterPro" id="IPR043519">
    <property type="entry name" value="NT_sf"/>
</dbReference>
<dbReference type="InterPro" id="IPR013546">
    <property type="entry name" value="PII_UdlTrfase/GS_AdlTrfase"/>
</dbReference>
<dbReference type="NCBIfam" id="NF010707">
    <property type="entry name" value="PRK14109.1"/>
    <property type="match status" value="1"/>
</dbReference>
<dbReference type="PANTHER" id="PTHR30621:SF0">
    <property type="entry name" value="BIFUNCTIONAL GLUTAMINE SYNTHETASE ADENYLYLTRANSFERASE_ADENYLYL-REMOVING ENZYME"/>
    <property type="match status" value="1"/>
</dbReference>
<dbReference type="PANTHER" id="PTHR30621">
    <property type="entry name" value="GLUTAMINE SYNTHETASE ADENYLYLTRANSFERASE"/>
    <property type="match status" value="1"/>
</dbReference>
<dbReference type="Pfam" id="PF08335">
    <property type="entry name" value="GlnD_UR_UTase"/>
    <property type="match status" value="2"/>
</dbReference>
<dbReference type="Pfam" id="PF03710">
    <property type="entry name" value="GlnE"/>
    <property type="match status" value="2"/>
</dbReference>
<dbReference type="SUPFAM" id="SSF81301">
    <property type="entry name" value="Nucleotidyltransferase"/>
    <property type="match status" value="2"/>
</dbReference>
<dbReference type="SUPFAM" id="SSF81593">
    <property type="entry name" value="Nucleotidyltransferase substrate binding subunit/domain"/>
    <property type="match status" value="2"/>
</dbReference>
<organism>
    <name type="scientific">Bifidobacterium longum subsp. infantis (strain ATCC 15697 / DSM 20088 / JCM 1222 / NCTC 11817 / S12)</name>
    <dbReference type="NCBI Taxonomy" id="391904"/>
    <lineage>
        <taxon>Bacteria</taxon>
        <taxon>Bacillati</taxon>
        <taxon>Actinomycetota</taxon>
        <taxon>Actinomycetes</taxon>
        <taxon>Bifidobacteriales</taxon>
        <taxon>Bifidobacteriaceae</taxon>
        <taxon>Bifidobacterium</taxon>
    </lineage>
</organism>
<name>GLNE_BIFLS</name>
<feature type="chain" id="PRO_1000148541" description="Bifunctional glutamine synthetase adenylyltransferase/adenylyl-removing enzyme">
    <location>
        <begin position="1"/>
        <end position="1076"/>
    </location>
</feature>
<feature type="region of interest" description="Adenylyl removase" evidence="1">
    <location>
        <begin position="1"/>
        <end position="521"/>
    </location>
</feature>
<feature type="region of interest" description="Adenylyl transferase" evidence="1">
    <location>
        <begin position="524"/>
        <end position="1076"/>
    </location>
</feature>
<feature type="region of interest" description="Disordered" evidence="2">
    <location>
        <begin position="1041"/>
        <end position="1076"/>
    </location>
</feature>
<feature type="compositionally biased region" description="Low complexity" evidence="2">
    <location>
        <begin position="1041"/>
        <end position="1056"/>
    </location>
</feature>
<keyword id="KW-0067">ATP-binding</keyword>
<keyword id="KW-0460">Magnesium</keyword>
<keyword id="KW-0511">Multifunctional enzyme</keyword>
<keyword id="KW-0547">Nucleotide-binding</keyword>
<keyword id="KW-0548">Nucleotidyltransferase</keyword>
<keyword id="KW-0808">Transferase</keyword>
<protein>
    <recommendedName>
        <fullName evidence="1">Bifunctional glutamine synthetase adenylyltransferase/adenylyl-removing enzyme</fullName>
    </recommendedName>
    <alternativeName>
        <fullName evidence="1">ATP:glutamine synthetase adenylyltransferase</fullName>
    </alternativeName>
    <alternativeName>
        <fullName evidence="1">ATase</fullName>
    </alternativeName>
    <domain>
        <recommendedName>
            <fullName evidence="1">Glutamine synthetase adenylyl-L-tyrosine phosphorylase</fullName>
            <ecNumber evidence="1">2.7.7.89</ecNumber>
        </recommendedName>
        <alternativeName>
            <fullName evidence="1">Adenylyl removase</fullName>
            <shortName evidence="1">AR</shortName>
            <shortName evidence="1">AT-N</shortName>
        </alternativeName>
    </domain>
    <domain>
        <recommendedName>
            <fullName evidence="1">Glutamine synthetase adenylyl transferase</fullName>
            <ecNumber evidence="1">2.7.7.42</ecNumber>
        </recommendedName>
        <alternativeName>
            <fullName evidence="1">Adenylyl transferase</fullName>
            <shortName evidence="1">AT</shortName>
            <shortName evidence="1">AT-C</shortName>
        </alternativeName>
    </domain>
</protein>
<accession>B7GRV5</accession>
<accession>E8MKK4</accession>